<sequence length="116" mass="12628">MTDKKVIRLRRARKARLKMHELEVVRLCVFRSSQHIYAQVISADGSKVLASASTLDKDLRDGATGNIDAATKVGKLVAERAKAAGVSQVAFDRSGFKYHGRVKALADAAREGGLEF</sequence>
<gene>
    <name evidence="1" type="primary">rplR</name>
    <name type="ordered locus">PputGB1_0500</name>
</gene>
<feature type="chain" id="PRO_1000086679" description="Large ribosomal subunit protein uL18">
    <location>
        <begin position="1"/>
        <end position="116"/>
    </location>
</feature>
<accession>B0KK83</accession>
<dbReference type="EMBL" id="CP000926">
    <property type="protein sequence ID" value="ABY96411.1"/>
    <property type="molecule type" value="Genomic_DNA"/>
</dbReference>
<dbReference type="RefSeq" id="WP_003255467.1">
    <property type="nucleotide sequence ID" value="NC_010322.1"/>
</dbReference>
<dbReference type="SMR" id="B0KK83"/>
<dbReference type="GeneID" id="83677768"/>
<dbReference type="KEGG" id="ppg:PputGB1_0500"/>
<dbReference type="eggNOG" id="COG0256">
    <property type="taxonomic scope" value="Bacteria"/>
</dbReference>
<dbReference type="HOGENOM" id="CLU_098841_0_1_6"/>
<dbReference type="Proteomes" id="UP000002157">
    <property type="component" value="Chromosome"/>
</dbReference>
<dbReference type="GO" id="GO:0022625">
    <property type="term" value="C:cytosolic large ribosomal subunit"/>
    <property type="evidence" value="ECO:0007669"/>
    <property type="project" value="TreeGrafter"/>
</dbReference>
<dbReference type="GO" id="GO:0008097">
    <property type="term" value="F:5S rRNA binding"/>
    <property type="evidence" value="ECO:0007669"/>
    <property type="project" value="TreeGrafter"/>
</dbReference>
<dbReference type="GO" id="GO:0003735">
    <property type="term" value="F:structural constituent of ribosome"/>
    <property type="evidence" value="ECO:0007669"/>
    <property type="project" value="InterPro"/>
</dbReference>
<dbReference type="GO" id="GO:0006412">
    <property type="term" value="P:translation"/>
    <property type="evidence" value="ECO:0007669"/>
    <property type="project" value="UniProtKB-UniRule"/>
</dbReference>
<dbReference type="CDD" id="cd00432">
    <property type="entry name" value="Ribosomal_L18_L5e"/>
    <property type="match status" value="1"/>
</dbReference>
<dbReference type="FunFam" id="3.30.420.100:FF:000001">
    <property type="entry name" value="50S ribosomal protein L18"/>
    <property type="match status" value="1"/>
</dbReference>
<dbReference type="Gene3D" id="3.30.420.100">
    <property type="match status" value="1"/>
</dbReference>
<dbReference type="HAMAP" id="MF_01337_B">
    <property type="entry name" value="Ribosomal_uL18_B"/>
    <property type="match status" value="1"/>
</dbReference>
<dbReference type="InterPro" id="IPR004389">
    <property type="entry name" value="Ribosomal_uL18_bac-type"/>
</dbReference>
<dbReference type="InterPro" id="IPR005484">
    <property type="entry name" value="Ribosomal_uL18_bac/euk"/>
</dbReference>
<dbReference type="NCBIfam" id="TIGR00060">
    <property type="entry name" value="L18_bact"/>
    <property type="match status" value="1"/>
</dbReference>
<dbReference type="PANTHER" id="PTHR12899">
    <property type="entry name" value="39S RIBOSOMAL PROTEIN L18, MITOCHONDRIAL"/>
    <property type="match status" value="1"/>
</dbReference>
<dbReference type="PANTHER" id="PTHR12899:SF3">
    <property type="entry name" value="LARGE RIBOSOMAL SUBUNIT PROTEIN UL18M"/>
    <property type="match status" value="1"/>
</dbReference>
<dbReference type="Pfam" id="PF00861">
    <property type="entry name" value="Ribosomal_L18p"/>
    <property type="match status" value="1"/>
</dbReference>
<dbReference type="SUPFAM" id="SSF53137">
    <property type="entry name" value="Translational machinery components"/>
    <property type="match status" value="1"/>
</dbReference>
<reference key="1">
    <citation type="submission" date="2008-01" db="EMBL/GenBank/DDBJ databases">
        <title>Complete sequence of Pseudomonas putida GB-1.</title>
        <authorList>
            <consortium name="US DOE Joint Genome Institute"/>
            <person name="Copeland A."/>
            <person name="Lucas S."/>
            <person name="Lapidus A."/>
            <person name="Barry K."/>
            <person name="Glavina del Rio T."/>
            <person name="Dalin E."/>
            <person name="Tice H."/>
            <person name="Pitluck S."/>
            <person name="Bruce D."/>
            <person name="Goodwin L."/>
            <person name="Chertkov O."/>
            <person name="Brettin T."/>
            <person name="Detter J.C."/>
            <person name="Han C."/>
            <person name="Kuske C.R."/>
            <person name="Schmutz J."/>
            <person name="Larimer F."/>
            <person name="Land M."/>
            <person name="Hauser L."/>
            <person name="Kyrpides N."/>
            <person name="Kim E."/>
            <person name="McCarthy J.K."/>
            <person name="Richardson P."/>
        </authorList>
    </citation>
    <scope>NUCLEOTIDE SEQUENCE [LARGE SCALE GENOMIC DNA]</scope>
    <source>
        <strain>GB-1</strain>
    </source>
</reference>
<keyword id="KW-0687">Ribonucleoprotein</keyword>
<keyword id="KW-0689">Ribosomal protein</keyword>
<keyword id="KW-0694">RNA-binding</keyword>
<keyword id="KW-0699">rRNA-binding</keyword>
<evidence type="ECO:0000255" key="1">
    <source>
        <dbReference type="HAMAP-Rule" id="MF_01337"/>
    </source>
</evidence>
<evidence type="ECO:0000305" key="2"/>
<protein>
    <recommendedName>
        <fullName evidence="1">Large ribosomal subunit protein uL18</fullName>
    </recommendedName>
    <alternativeName>
        <fullName evidence="2">50S ribosomal protein L18</fullName>
    </alternativeName>
</protein>
<comment type="function">
    <text evidence="1">This is one of the proteins that bind and probably mediate the attachment of the 5S RNA into the large ribosomal subunit, where it forms part of the central protuberance.</text>
</comment>
<comment type="subunit">
    <text evidence="1">Part of the 50S ribosomal subunit; part of the 5S rRNA/L5/L18/L25 subcomplex. Contacts the 5S and 23S rRNAs.</text>
</comment>
<comment type="similarity">
    <text evidence="1">Belongs to the universal ribosomal protein uL18 family.</text>
</comment>
<organism>
    <name type="scientific">Pseudomonas putida (strain GB-1)</name>
    <dbReference type="NCBI Taxonomy" id="76869"/>
    <lineage>
        <taxon>Bacteria</taxon>
        <taxon>Pseudomonadati</taxon>
        <taxon>Pseudomonadota</taxon>
        <taxon>Gammaproteobacteria</taxon>
        <taxon>Pseudomonadales</taxon>
        <taxon>Pseudomonadaceae</taxon>
        <taxon>Pseudomonas</taxon>
    </lineage>
</organism>
<proteinExistence type="inferred from homology"/>
<name>RL18_PSEPG</name>